<keyword id="KW-0028">Amino-acid biosynthesis</keyword>
<keyword id="KW-0368">Histidine biosynthesis</keyword>
<keyword id="KW-0378">Hydrolase</keyword>
<keyword id="KW-0486">Methionine biosynthesis</keyword>
<keyword id="KW-0511">Multifunctional enzyme</keyword>
<keyword id="KW-0521">NADP</keyword>
<keyword id="KW-0554">One-carbon metabolism</keyword>
<keyword id="KW-0560">Oxidoreductase</keyword>
<keyword id="KW-0658">Purine biosynthesis</keyword>
<proteinExistence type="inferred from homology"/>
<comment type="function">
    <text evidence="1">Catalyzes the oxidation of 5,10-methylenetetrahydrofolate to 5,10-methenyltetrahydrofolate and then the hydrolysis of 5,10-methenyltetrahydrofolate to 10-formyltetrahydrofolate.</text>
</comment>
<comment type="catalytic activity">
    <reaction evidence="1">
        <text>(6R)-5,10-methylene-5,6,7,8-tetrahydrofolate + NADP(+) = (6R)-5,10-methenyltetrahydrofolate + NADPH</text>
        <dbReference type="Rhea" id="RHEA:22812"/>
        <dbReference type="ChEBI" id="CHEBI:15636"/>
        <dbReference type="ChEBI" id="CHEBI:57455"/>
        <dbReference type="ChEBI" id="CHEBI:57783"/>
        <dbReference type="ChEBI" id="CHEBI:58349"/>
        <dbReference type="EC" id="1.5.1.5"/>
    </reaction>
</comment>
<comment type="catalytic activity">
    <reaction evidence="1">
        <text>(6R)-5,10-methenyltetrahydrofolate + H2O = (6R)-10-formyltetrahydrofolate + H(+)</text>
        <dbReference type="Rhea" id="RHEA:23700"/>
        <dbReference type="ChEBI" id="CHEBI:15377"/>
        <dbReference type="ChEBI" id="CHEBI:15378"/>
        <dbReference type="ChEBI" id="CHEBI:57455"/>
        <dbReference type="ChEBI" id="CHEBI:195366"/>
        <dbReference type="EC" id="3.5.4.9"/>
    </reaction>
</comment>
<comment type="pathway">
    <text evidence="1">One-carbon metabolism; tetrahydrofolate interconversion.</text>
</comment>
<comment type="subunit">
    <text evidence="1">Homodimer.</text>
</comment>
<comment type="similarity">
    <text evidence="1">Belongs to the tetrahydrofolate dehydrogenase/cyclohydrolase family.</text>
</comment>
<reference key="1">
    <citation type="submission" date="2007-05" db="EMBL/GenBank/DDBJ databases">
        <title>Complete sequence of Dehalococcoides sp. BAV1.</title>
        <authorList>
            <consortium name="US DOE Joint Genome Institute"/>
            <person name="Copeland A."/>
            <person name="Lucas S."/>
            <person name="Lapidus A."/>
            <person name="Barry K."/>
            <person name="Detter J.C."/>
            <person name="Glavina del Rio T."/>
            <person name="Hammon N."/>
            <person name="Israni S."/>
            <person name="Pitluck S."/>
            <person name="Lowry S."/>
            <person name="Clum A."/>
            <person name="Schmutz J."/>
            <person name="Larimer F."/>
            <person name="Land M."/>
            <person name="Hauser L."/>
            <person name="Kyrpides N."/>
            <person name="Kim E."/>
            <person name="Ritalahti K.M."/>
            <person name="Loeffler F."/>
            <person name="Richardson P."/>
        </authorList>
    </citation>
    <scope>NUCLEOTIDE SEQUENCE [LARGE SCALE GENOMIC DNA]</scope>
    <source>
        <strain>ATCC BAA-2100 / JCM 16839 / KCTC 5957 / BAV1</strain>
    </source>
</reference>
<feature type="chain" id="PRO_1000087899" description="Bifunctional protein FolD">
    <location>
        <begin position="1"/>
        <end position="296"/>
    </location>
</feature>
<feature type="binding site" evidence="1">
    <location>
        <begin position="166"/>
        <end position="168"/>
    </location>
    <ligand>
        <name>NADP(+)</name>
        <dbReference type="ChEBI" id="CHEBI:58349"/>
    </ligand>
</feature>
<feature type="binding site" evidence="1">
    <location>
        <position position="195"/>
    </location>
    <ligand>
        <name>NADP(+)</name>
        <dbReference type="ChEBI" id="CHEBI:58349"/>
    </ligand>
</feature>
<feature type="binding site" evidence="1">
    <location>
        <position position="236"/>
    </location>
    <ligand>
        <name>NADP(+)</name>
        <dbReference type="ChEBI" id="CHEBI:58349"/>
    </ligand>
</feature>
<accession>A5FRF1</accession>
<evidence type="ECO:0000255" key="1">
    <source>
        <dbReference type="HAMAP-Rule" id="MF_01576"/>
    </source>
</evidence>
<organism>
    <name type="scientific">Dehalococcoides mccartyi (strain ATCC BAA-2100 / JCM 16839 / KCTC 5957 / BAV1)</name>
    <dbReference type="NCBI Taxonomy" id="216389"/>
    <lineage>
        <taxon>Bacteria</taxon>
        <taxon>Bacillati</taxon>
        <taxon>Chloroflexota</taxon>
        <taxon>Dehalococcoidia</taxon>
        <taxon>Dehalococcoidales</taxon>
        <taxon>Dehalococcoidaceae</taxon>
        <taxon>Dehalococcoides</taxon>
    </lineage>
</organism>
<protein>
    <recommendedName>
        <fullName evidence="1">Bifunctional protein FolD</fullName>
    </recommendedName>
    <domain>
        <recommendedName>
            <fullName evidence="1">Methylenetetrahydrofolate dehydrogenase</fullName>
            <ecNumber evidence="1">1.5.1.5</ecNumber>
        </recommendedName>
    </domain>
    <domain>
        <recommendedName>
            <fullName evidence="1">Methenyltetrahydrofolate cyclohydrolase</fullName>
            <ecNumber evidence="1">3.5.4.9</ecNumber>
        </recommendedName>
    </domain>
</protein>
<sequence>MSAHIINGTEIAAAIREEIRSEVIALKAKAGIVPGLATVLVGDDPASHSYVDSKIKMCQNLGIYSEHHPLPQNATIEDLLTLIAKLNADPKISGILVQVPLPAQISESLVLNAINPDKDVDGFHPVNVGRMCLGEPCFLPCTPHGVQELLIRSGIKIEGTHVVIVGRSNLVGKPLANILLQKAPGANATVTICHSGTKNLPEITRQADILVAAMGKPKFITSDMVREGAVVIDVGTTCIGYTPEGKRILSGDVDFEEVKEKAFAITPVPKGVGPMTIIMLMLNTLTAAKRAAGLIK</sequence>
<name>FOLD_DEHMB</name>
<gene>
    <name evidence="1" type="primary">folD</name>
    <name type="ordered locus">DehaBAV1_0637</name>
</gene>
<dbReference type="EC" id="1.5.1.5" evidence="1"/>
<dbReference type="EC" id="3.5.4.9" evidence="1"/>
<dbReference type="EMBL" id="CP000688">
    <property type="protein sequence ID" value="ABQ17222.1"/>
    <property type="molecule type" value="Genomic_DNA"/>
</dbReference>
<dbReference type="SMR" id="A5FRF1"/>
<dbReference type="KEGG" id="deb:DehaBAV1_0637"/>
<dbReference type="PATRIC" id="fig|216389.18.peg.685"/>
<dbReference type="HOGENOM" id="CLU_034045_2_1_0"/>
<dbReference type="UniPathway" id="UPA00193"/>
<dbReference type="GO" id="GO:0005829">
    <property type="term" value="C:cytosol"/>
    <property type="evidence" value="ECO:0007669"/>
    <property type="project" value="TreeGrafter"/>
</dbReference>
<dbReference type="GO" id="GO:0004477">
    <property type="term" value="F:methenyltetrahydrofolate cyclohydrolase activity"/>
    <property type="evidence" value="ECO:0007669"/>
    <property type="project" value="UniProtKB-UniRule"/>
</dbReference>
<dbReference type="GO" id="GO:0004488">
    <property type="term" value="F:methylenetetrahydrofolate dehydrogenase (NADP+) activity"/>
    <property type="evidence" value="ECO:0007669"/>
    <property type="project" value="UniProtKB-UniRule"/>
</dbReference>
<dbReference type="GO" id="GO:0000105">
    <property type="term" value="P:L-histidine biosynthetic process"/>
    <property type="evidence" value="ECO:0007669"/>
    <property type="project" value="UniProtKB-KW"/>
</dbReference>
<dbReference type="GO" id="GO:0009086">
    <property type="term" value="P:methionine biosynthetic process"/>
    <property type="evidence" value="ECO:0007669"/>
    <property type="project" value="UniProtKB-KW"/>
</dbReference>
<dbReference type="GO" id="GO:0006164">
    <property type="term" value="P:purine nucleotide biosynthetic process"/>
    <property type="evidence" value="ECO:0007669"/>
    <property type="project" value="UniProtKB-KW"/>
</dbReference>
<dbReference type="GO" id="GO:0035999">
    <property type="term" value="P:tetrahydrofolate interconversion"/>
    <property type="evidence" value="ECO:0007669"/>
    <property type="project" value="UniProtKB-UniRule"/>
</dbReference>
<dbReference type="CDD" id="cd01080">
    <property type="entry name" value="NAD_bind_m-THF_DH_Cyclohyd"/>
    <property type="match status" value="1"/>
</dbReference>
<dbReference type="FunFam" id="3.40.50.720:FF:000189">
    <property type="entry name" value="Bifunctional protein FolD"/>
    <property type="match status" value="1"/>
</dbReference>
<dbReference type="FunFam" id="3.40.50.10860:FF:000005">
    <property type="entry name" value="C-1-tetrahydrofolate synthase, cytoplasmic, putative"/>
    <property type="match status" value="1"/>
</dbReference>
<dbReference type="Gene3D" id="3.40.50.10860">
    <property type="entry name" value="Leucine Dehydrogenase, chain A, domain 1"/>
    <property type="match status" value="1"/>
</dbReference>
<dbReference type="Gene3D" id="3.40.50.720">
    <property type="entry name" value="NAD(P)-binding Rossmann-like Domain"/>
    <property type="match status" value="1"/>
</dbReference>
<dbReference type="HAMAP" id="MF_01576">
    <property type="entry name" value="THF_DHG_CYH"/>
    <property type="match status" value="1"/>
</dbReference>
<dbReference type="InterPro" id="IPR046346">
    <property type="entry name" value="Aminoacid_DH-like_N_sf"/>
</dbReference>
<dbReference type="InterPro" id="IPR036291">
    <property type="entry name" value="NAD(P)-bd_dom_sf"/>
</dbReference>
<dbReference type="InterPro" id="IPR000672">
    <property type="entry name" value="THF_DH/CycHdrlase"/>
</dbReference>
<dbReference type="InterPro" id="IPR020630">
    <property type="entry name" value="THF_DH/CycHdrlase_cat_dom"/>
</dbReference>
<dbReference type="InterPro" id="IPR020867">
    <property type="entry name" value="THF_DH/CycHdrlase_CS"/>
</dbReference>
<dbReference type="InterPro" id="IPR020631">
    <property type="entry name" value="THF_DH/CycHdrlase_NAD-bd_dom"/>
</dbReference>
<dbReference type="PANTHER" id="PTHR48099:SF5">
    <property type="entry name" value="C-1-TETRAHYDROFOLATE SYNTHASE, CYTOPLASMIC"/>
    <property type="match status" value="1"/>
</dbReference>
<dbReference type="PANTHER" id="PTHR48099">
    <property type="entry name" value="C-1-TETRAHYDROFOLATE SYNTHASE, CYTOPLASMIC-RELATED"/>
    <property type="match status" value="1"/>
</dbReference>
<dbReference type="Pfam" id="PF00763">
    <property type="entry name" value="THF_DHG_CYH"/>
    <property type="match status" value="1"/>
</dbReference>
<dbReference type="Pfam" id="PF02882">
    <property type="entry name" value="THF_DHG_CYH_C"/>
    <property type="match status" value="1"/>
</dbReference>
<dbReference type="PRINTS" id="PR00085">
    <property type="entry name" value="THFDHDRGNASE"/>
</dbReference>
<dbReference type="SUPFAM" id="SSF53223">
    <property type="entry name" value="Aminoacid dehydrogenase-like, N-terminal domain"/>
    <property type="match status" value="1"/>
</dbReference>
<dbReference type="SUPFAM" id="SSF51735">
    <property type="entry name" value="NAD(P)-binding Rossmann-fold domains"/>
    <property type="match status" value="1"/>
</dbReference>
<dbReference type="PROSITE" id="PS00767">
    <property type="entry name" value="THF_DHG_CYH_2"/>
    <property type="match status" value="1"/>
</dbReference>